<sequence>MNSKIFAVLLLLGLLSCVLSDQYCPKSSITACKKMNIRNDCCKDDDCTGGSWCCATPCGNFCKYPTDRPGGKRAAGGKSCKTGYVY</sequence>
<feature type="signal peptide" evidence="2">
    <location>
        <begin position="1"/>
        <end position="20"/>
    </location>
</feature>
<feature type="chain" id="PRO_0000401892" description="U15-lycotoxin-Ls1d">
    <location>
        <begin position="21"/>
        <end position="86"/>
    </location>
</feature>
<feature type="domain" description="WAP">
    <location>
        <begin position="21"/>
        <end position="66"/>
    </location>
</feature>
<feature type="disulfide bond" evidence="1">
    <location>
        <begin position="24"/>
        <end position="54"/>
    </location>
</feature>
<feature type="disulfide bond" evidence="1">
    <location>
        <begin position="32"/>
        <end position="58"/>
    </location>
</feature>
<feature type="disulfide bond" evidence="1">
    <location>
        <begin position="41"/>
        <end position="53"/>
    </location>
</feature>
<feature type="disulfide bond" evidence="3">
    <location>
        <begin position="42"/>
        <end position="80"/>
    </location>
</feature>
<feature type="disulfide bond" evidence="1">
    <location>
        <begin position="47"/>
        <end position="62"/>
    </location>
</feature>
<comment type="function">
    <text evidence="1">Has antibacterial activity.</text>
</comment>
<comment type="subcellular location">
    <subcellularLocation>
        <location evidence="1">Secreted</location>
    </subcellularLocation>
</comment>
<comment type="tissue specificity">
    <text>Expressed by the venom gland.</text>
</comment>
<comment type="PTM">
    <text evidence="3">Contains 5 disulfide bonds.</text>
</comment>
<comment type="similarity">
    <text evidence="3">Belongs to the venom protein 11 family. 01 (wap-1) subfamily.</text>
</comment>
<evidence type="ECO:0000250" key="1"/>
<evidence type="ECO:0000255" key="2"/>
<evidence type="ECO:0000305" key="3"/>
<proteinExistence type="evidence at transcript level"/>
<organism>
    <name type="scientific">Lycosa singoriensis</name>
    <name type="common">Wolf spider</name>
    <name type="synonym">Aranea singoriensis</name>
    <dbReference type="NCBI Taxonomy" id="434756"/>
    <lineage>
        <taxon>Eukaryota</taxon>
        <taxon>Metazoa</taxon>
        <taxon>Ecdysozoa</taxon>
        <taxon>Arthropoda</taxon>
        <taxon>Chelicerata</taxon>
        <taxon>Arachnida</taxon>
        <taxon>Araneae</taxon>
        <taxon>Araneomorphae</taxon>
        <taxon>Entelegynae</taxon>
        <taxon>Lycosoidea</taxon>
        <taxon>Lycosidae</taxon>
        <taxon>Lycosa</taxon>
    </lineage>
</organism>
<dbReference type="EMBL" id="EU926133">
    <property type="protein sequence ID" value="ACI41465.1"/>
    <property type="molecule type" value="mRNA"/>
</dbReference>
<dbReference type="EMBL" id="FM864137">
    <property type="protein sequence ID" value="CAS03734.1"/>
    <property type="molecule type" value="mRNA"/>
</dbReference>
<dbReference type="SMR" id="B6DD49"/>
<dbReference type="ArachnoServer" id="AS001069">
    <property type="toxin name" value="U15-lycotoxin-Ls1d"/>
</dbReference>
<dbReference type="GO" id="GO:0005576">
    <property type="term" value="C:extracellular region"/>
    <property type="evidence" value="ECO:0007669"/>
    <property type="project" value="UniProtKB-SubCell"/>
</dbReference>
<dbReference type="GO" id="GO:0090729">
    <property type="term" value="F:toxin activity"/>
    <property type="evidence" value="ECO:0007669"/>
    <property type="project" value="UniProtKB-KW"/>
</dbReference>
<dbReference type="GO" id="GO:0042742">
    <property type="term" value="P:defense response to bacterium"/>
    <property type="evidence" value="ECO:0007669"/>
    <property type="project" value="UniProtKB-KW"/>
</dbReference>
<dbReference type="InterPro" id="IPR036645">
    <property type="entry name" value="Elafin-like_sf"/>
</dbReference>
<dbReference type="SUPFAM" id="SSF57256">
    <property type="entry name" value="Elafin-like"/>
    <property type="match status" value="1"/>
</dbReference>
<accession>B6DD49</accession>
<reference key="1">
    <citation type="journal article" date="2010" name="Zoology">
        <title>Transcriptome analysis of the venom glands of the Chinese wolf spider Lycosa singoriensis.</title>
        <authorList>
            <person name="Zhang Y."/>
            <person name="Chen J."/>
            <person name="Tang X."/>
            <person name="Wang F."/>
            <person name="Jiang L."/>
            <person name="Xiong X."/>
            <person name="Wang M."/>
            <person name="Rong M."/>
            <person name="Liu Z."/>
            <person name="Liang S."/>
        </authorList>
    </citation>
    <scope>NUCLEOTIDE SEQUENCE [LARGE SCALE MRNA]</scope>
    <source>
        <tissue>Venom gland</tissue>
    </source>
</reference>
<keyword id="KW-0044">Antibiotic</keyword>
<keyword id="KW-0929">Antimicrobial</keyword>
<keyword id="KW-1015">Disulfide bond</keyword>
<keyword id="KW-0964">Secreted</keyword>
<keyword id="KW-0732">Signal</keyword>
<keyword id="KW-0800">Toxin</keyword>
<protein>
    <recommendedName>
        <fullName>U15-lycotoxin-Ls1d</fullName>
    </recommendedName>
    <alternativeName>
        <fullName>Toxin-like structure LSTX-N16</fullName>
    </alternativeName>
</protein>
<name>TXF16_LYCSI</name>